<name>PPZE_METRR</name>
<reference key="1">
    <citation type="journal article" date="2016" name="Genome Biol. Evol.">
        <title>Divergent and convergent evolution of fungal pathogenicity.</title>
        <authorList>
            <person name="Shang Y."/>
            <person name="Xiao G."/>
            <person name="Zheng P."/>
            <person name="Cen K."/>
            <person name="Zhan S."/>
            <person name="Wang C."/>
        </authorList>
    </citation>
    <scope>NUCLEOTIDE SEQUENCE [LARGE SCALE GENOMIC DNA]</scope>
    <source>
        <strain>RCEF 4871</strain>
    </source>
</reference>
<reference key="2">
    <citation type="journal article" date="2019" name="Environ. Microbiol.">
        <title>Orthologous peramine and pyrrolopyrazine-producing biosynthetic gene clusters in Metarhizium rileyi, Metarhizium majus and Cladonia grayi.</title>
        <authorList>
            <person name="Berry D."/>
            <person name="Mace W."/>
            <person name="Rehner S.A."/>
            <person name="Grage K."/>
            <person name="Dijkwel P.P."/>
            <person name="Young C.A."/>
            <person name="Scott B."/>
        </authorList>
    </citation>
    <scope>FUNCTION</scope>
    <scope>PATHWAY</scope>
</reference>
<protein>
    <recommendedName>
        <fullName evidence="7">Cytochrome P450 monooxygenase ppzE</fullName>
        <ecNumber evidence="9">1.-.-.-</ecNumber>
    </recommendedName>
    <alternativeName>
        <fullName evidence="7">Pyrrolopyrazine biosynthesis cluster protein E</fullName>
    </alternativeName>
</protein>
<evidence type="ECO:0000250" key="1">
    <source>
        <dbReference type="UniProtKB" id="A0A455ZIK8"/>
    </source>
</evidence>
<evidence type="ECO:0000250" key="2">
    <source>
        <dbReference type="UniProtKB" id="P04798"/>
    </source>
</evidence>
<evidence type="ECO:0000250" key="3">
    <source>
        <dbReference type="UniProtKB" id="Q4H424"/>
    </source>
</evidence>
<evidence type="ECO:0000255" key="4"/>
<evidence type="ECO:0000255" key="5">
    <source>
        <dbReference type="PROSITE-ProRule" id="PRU00498"/>
    </source>
</evidence>
<evidence type="ECO:0000269" key="6">
    <source>
    </source>
</evidence>
<evidence type="ECO:0000303" key="7">
    <source>
    </source>
</evidence>
<evidence type="ECO:0000305" key="8"/>
<evidence type="ECO:0000305" key="9">
    <source>
    </source>
</evidence>
<proteinExistence type="inferred from homology"/>
<comment type="function">
    <text evidence="1 3 6">Cytochrome P450 monooxygenase; part of the gene cluster that mediates the biosynthesis of pyrrolopyrazines, secondary metabolites showing insecticidal activity (PubMed:30452111). The role of ppzE within the pathway has still to be determined (By similarity). The single multifunctional NRPS ppzA is sufficient to produce peramine via condensation of 1-pyrroline-5-carboxylate and arginine, N-methylation of the alpha-amino group of arginine and reduction of the thioester and the cyclization to form an iminium ion resulting in release from the peptide synthetase. Deprotonation of this intermediate and oxidation of the pyrroline ring would give rise to peramine (By similarity). In Epichloe species that produce only peramine, the peramine synthetase gene is not localized in a gene cluster, in contrast to Metarhizium species that contain additional pyrrolopyrazine biosynthesis genes. The 2-oxoglutarate-Fe(II) type oxidoreductase ppzC hydroxylates peramine to yield the newly identified compound 8-hydroxyperamine whereas ppzD converts L-proline into trans-4-hydroxy-L-proline, a precursor of peramine biosynthesis (By similarity).</text>
</comment>
<comment type="cofactor">
    <cofactor evidence="2">
        <name>heme</name>
        <dbReference type="ChEBI" id="CHEBI:30413"/>
    </cofactor>
</comment>
<comment type="pathway">
    <text evidence="9">Secondary metabolite biosynthesis.</text>
</comment>
<comment type="subcellular location">
    <subcellularLocation>
        <location evidence="4">Membrane</location>
        <topology evidence="4">Single-pass membrane protein</topology>
    </subcellularLocation>
</comment>
<comment type="similarity">
    <text evidence="8">Belongs to the cytochrome P450 family.</text>
</comment>
<gene>
    <name evidence="7" type="primary">ppzE</name>
    <name type="ORF">NOR_07094</name>
</gene>
<sequence>MLSIIHVGWLELVWFVALYPFACWTLFAVLKSVYRITLHPLAKFPGPKLAGASYCYEFWYEIVCGIQYTQKIIKLHEQYGPIVRINPDELHFNDIDFVDVVYTAGARKRDKSRHYLAGFEGSIIRFVSSDFHSFLIDTRVKKPERLKRVVLGAERHHDAKDCPMFLELLNSNLPAQEKSKQRLMYEANGATLAGSGSTAIALSNIVYNLVANPRIGHKLRSELMRKVSASKNLPTWSTLEELPYLTAVIHEGLRSMYDPSKERLPYDPSQERLPRVATEEELIYEGGSALGKSKYVIPRGYAISTSAHVVHSDESIFPNASQFDPERWLDRDGQRNKELERHLLSFSKGSRHCLGMHCRRATCLAIPASARNGTSGYQFTSGQLEYKVQERQ</sequence>
<accession>A0A166YZU9</accession>
<keyword id="KW-0325">Glycoprotein</keyword>
<keyword id="KW-0349">Heme</keyword>
<keyword id="KW-0408">Iron</keyword>
<keyword id="KW-0472">Membrane</keyword>
<keyword id="KW-0479">Metal-binding</keyword>
<keyword id="KW-0503">Monooxygenase</keyword>
<keyword id="KW-0560">Oxidoreductase</keyword>
<keyword id="KW-1185">Reference proteome</keyword>
<keyword id="KW-0812">Transmembrane</keyword>
<keyword id="KW-1133">Transmembrane helix</keyword>
<organism>
    <name type="scientific">Metarhizium rileyi (strain RCEF 4871)</name>
    <name type="common">Nomuraea rileyi</name>
    <dbReference type="NCBI Taxonomy" id="1649241"/>
    <lineage>
        <taxon>Eukaryota</taxon>
        <taxon>Fungi</taxon>
        <taxon>Dikarya</taxon>
        <taxon>Ascomycota</taxon>
        <taxon>Pezizomycotina</taxon>
        <taxon>Sordariomycetes</taxon>
        <taxon>Hypocreomycetidae</taxon>
        <taxon>Hypocreales</taxon>
        <taxon>Clavicipitaceae</taxon>
        <taxon>Metarhizium</taxon>
    </lineage>
</organism>
<feature type="chain" id="PRO_0000450263" description="Cytochrome P450 monooxygenase ppzE">
    <location>
        <begin position="1"/>
        <end position="392"/>
    </location>
</feature>
<feature type="transmembrane region" description="Helical" evidence="4">
    <location>
        <begin position="10"/>
        <end position="30"/>
    </location>
</feature>
<feature type="binding site" description="axial binding residue" evidence="2">
    <location>
        <position position="353"/>
    </location>
    <ligand>
        <name>heme</name>
        <dbReference type="ChEBI" id="CHEBI:30413"/>
    </ligand>
    <ligandPart>
        <name>Fe</name>
        <dbReference type="ChEBI" id="CHEBI:18248"/>
    </ligandPart>
</feature>
<feature type="glycosylation site" description="N-linked (GlcNAc...) asparagine" evidence="5">
    <location>
        <position position="319"/>
    </location>
</feature>
<feature type="glycosylation site" description="N-linked (GlcNAc...) asparagine" evidence="5">
    <location>
        <position position="372"/>
    </location>
</feature>
<dbReference type="EC" id="1.-.-.-" evidence="9"/>
<dbReference type="EMBL" id="AZHC01000030">
    <property type="protein sequence ID" value="OAA37395.1"/>
    <property type="molecule type" value="Genomic_DNA"/>
</dbReference>
<dbReference type="SMR" id="A0A166YZU9"/>
<dbReference type="STRING" id="1081105.A0A166YZU9"/>
<dbReference type="GlyCosmos" id="A0A166YZU9">
    <property type="glycosylation" value="2 sites, No reported glycans"/>
</dbReference>
<dbReference type="OMA" id="ARHENGI"/>
<dbReference type="OrthoDB" id="3945418at2759"/>
<dbReference type="Proteomes" id="UP000243498">
    <property type="component" value="Unassembled WGS sequence"/>
</dbReference>
<dbReference type="GO" id="GO:0016020">
    <property type="term" value="C:membrane"/>
    <property type="evidence" value="ECO:0007669"/>
    <property type="project" value="UniProtKB-SubCell"/>
</dbReference>
<dbReference type="GO" id="GO:0020037">
    <property type="term" value="F:heme binding"/>
    <property type="evidence" value="ECO:0007669"/>
    <property type="project" value="InterPro"/>
</dbReference>
<dbReference type="GO" id="GO:0005506">
    <property type="term" value="F:iron ion binding"/>
    <property type="evidence" value="ECO:0007669"/>
    <property type="project" value="InterPro"/>
</dbReference>
<dbReference type="GO" id="GO:0004497">
    <property type="term" value="F:monooxygenase activity"/>
    <property type="evidence" value="ECO:0007669"/>
    <property type="project" value="UniProtKB-KW"/>
</dbReference>
<dbReference type="GO" id="GO:0016705">
    <property type="term" value="F:oxidoreductase activity, acting on paired donors, with incorporation or reduction of molecular oxygen"/>
    <property type="evidence" value="ECO:0007669"/>
    <property type="project" value="InterPro"/>
</dbReference>
<dbReference type="Gene3D" id="1.10.630.10">
    <property type="entry name" value="Cytochrome P450"/>
    <property type="match status" value="2"/>
</dbReference>
<dbReference type="InterPro" id="IPR001128">
    <property type="entry name" value="Cyt_P450"/>
</dbReference>
<dbReference type="InterPro" id="IPR017972">
    <property type="entry name" value="Cyt_P450_CS"/>
</dbReference>
<dbReference type="InterPro" id="IPR002401">
    <property type="entry name" value="Cyt_P450_E_grp-I"/>
</dbReference>
<dbReference type="InterPro" id="IPR036396">
    <property type="entry name" value="Cyt_P450_sf"/>
</dbReference>
<dbReference type="InterPro" id="IPR050121">
    <property type="entry name" value="Cytochrome_P450_monoxygenase"/>
</dbReference>
<dbReference type="PANTHER" id="PTHR24305">
    <property type="entry name" value="CYTOCHROME P450"/>
    <property type="match status" value="1"/>
</dbReference>
<dbReference type="PANTHER" id="PTHR24305:SF166">
    <property type="entry name" value="CYTOCHROME P450 12A4, MITOCHONDRIAL-RELATED"/>
    <property type="match status" value="1"/>
</dbReference>
<dbReference type="Pfam" id="PF00067">
    <property type="entry name" value="p450"/>
    <property type="match status" value="1"/>
</dbReference>
<dbReference type="PRINTS" id="PR00463">
    <property type="entry name" value="EP450I"/>
</dbReference>
<dbReference type="SUPFAM" id="SSF48264">
    <property type="entry name" value="Cytochrome P450"/>
    <property type="match status" value="1"/>
</dbReference>
<dbReference type="PROSITE" id="PS00086">
    <property type="entry name" value="CYTOCHROME_P450"/>
    <property type="match status" value="1"/>
</dbReference>